<proteinExistence type="inferred from homology"/>
<gene>
    <name evidence="1" type="primary">uppS2</name>
    <name type="ordered locus">TW486</name>
</gene>
<evidence type="ECO:0000255" key="1">
    <source>
        <dbReference type="HAMAP-Rule" id="MF_01139"/>
    </source>
</evidence>
<organism>
    <name type="scientific">Tropheryma whipplei (strain TW08/27)</name>
    <name type="common">Whipple's bacillus</name>
    <dbReference type="NCBI Taxonomy" id="218496"/>
    <lineage>
        <taxon>Bacteria</taxon>
        <taxon>Bacillati</taxon>
        <taxon>Actinomycetota</taxon>
        <taxon>Actinomycetes</taxon>
        <taxon>Micrococcales</taxon>
        <taxon>Tropherymataceae</taxon>
        <taxon>Tropheryma</taxon>
    </lineage>
</organism>
<feature type="chain" id="PRO_0000123708" description="Isoprenyl transferase 2">
    <location>
        <begin position="1"/>
        <end position="249"/>
    </location>
</feature>
<feature type="active site" evidence="1">
    <location>
        <position position="30"/>
    </location>
</feature>
<feature type="active site" description="Proton acceptor" evidence="1">
    <location>
        <position position="78"/>
    </location>
</feature>
<feature type="binding site" evidence="1">
    <location>
        <position position="30"/>
    </location>
    <ligand>
        <name>Mg(2+)</name>
        <dbReference type="ChEBI" id="CHEBI:18420"/>
    </ligand>
</feature>
<feature type="binding site" evidence="1">
    <location>
        <begin position="31"/>
        <end position="34"/>
    </location>
    <ligand>
        <name>substrate</name>
    </ligand>
</feature>
<feature type="binding site" evidence="1">
    <location>
        <position position="35"/>
    </location>
    <ligand>
        <name>substrate</name>
    </ligand>
</feature>
<feature type="binding site" evidence="1">
    <location>
        <position position="43"/>
    </location>
    <ligand>
        <name>substrate</name>
    </ligand>
</feature>
<feature type="binding site" evidence="1">
    <location>
        <position position="47"/>
    </location>
    <ligand>
        <name>substrate</name>
    </ligand>
</feature>
<feature type="binding site" evidence="1">
    <location>
        <begin position="75"/>
        <end position="77"/>
    </location>
    <ligand>
        <name>substrate</name>
    </ligand>
</feature>
<feature type="binding site" evidence="1">
    <location>
        <position position="79"/>
    </location>
    <ligand>
        <name>substrate</name>
    </ligand>
</feature>
<feature type="binding site" evidence="1">
    <location>
        <position position="81"/>
    </location>
    <ligand>
        <name>substrate</name>
    </ligand>
</feature>
<feature type="binding site" evidence="1">
    <location>
        <position position="198"/>
    </location>
    <ligand>
        <name>substrate</name>
    </ligand>
</feature>
<feature type="binding site" evidence="1">
    <location>
        <begin position="204"/>
        <end position="206"/>
    </location>
    <ligand>
        <name>substrate</name>
    </ligand>
</feature>
<feature type="binding site" evidence="1">
    <location>
        <position position="217"/>
    </location>
    <ligand>
        <name>Mg(2+)</name>
        <dbReference type="ChEBI" id="CHEBI:18420"/>
    </ligand>
</feature>
<dbReference type="EC" id="2.5.1.-" evidence="1"/>
<dbReference type="EMBL" id="BX251411">
    <property type="protein sequence ID" value="CAD67153.1"/>
    <property type="molecule type" value="Genomic_DNA"/>
</dbReference>
<dbReference type="RefSeq" id="WP_011096433.1">
    <property type="nucleotide sequence ID" value="NC_004551.1"/>
</dbReference>
<dbReference type="SMR" id="Q83HN8"/>
<dbReference type="GeneID" id="67388265"/>
<dbReference type="KEGG" id="tws:TW486"/>
<dbReference type="HOGENOM" id="CLU_038505_1_2_11"/>
<dbReference type="GO" id="GO:0005829">
    <property type="term" value="C:cytosol"/>
    <property type="evidence" value="ECO:0007669"/>
    <property type="project" value="TreeGrafter"/>
</dbReference>
<dbReference type="GO" id="GO:0005886">
    <property type="term" value="C:plasma membrane"/>
    <property type="evidence" value="ECO:0007669"/>
    <property type="project" value="TreeGrafter"/>
</dbReference>
<dbReference type="GO" id="GO:0008834">
    <property type="term" value="F:ditrans,polycis-undecaprenyl-diphosphate synthase [(2E,6E)-farnesyl-diphosphate specific] activity"/>
    <property type="evidence" value="ECO:0007669"/>
    <property type="project" value="TreeGrafter"/>
</dbReference>
<dbReference type="GO" id="GO:0000287">
    <property type="term" value="F:magnesium ion binding"/>
    <property type="evidence" value="ECO:0007669"/>
    <property type="project" value="UniProtKB-UniRule"/>
</dbReference>
<dbReference type="GO" id="GO:0030145">
    <property type="term" value="F:manganese ion binding"/>
    <property type="evidence" value="ECO:0007669"/>
    <property type="project" value="TreeGrafter"/>
</dbReference>
<dbReference type="GO" id="GO:0033850">
    <property type="term" value="F:Z-farnesyl diphosphate synthase activity"/>
    <property type="evidence" value="ECO:0007669"/>
    <property type="project" value="TreeGrafter"/>
</dbReference>
<dbReference type="GO" id="GO:0016094">
    <property type="term" value="P:polyprenol biosynthetic process"/>
    <property type="evidence" value="ECO:0007669"/>
    <property type="project" value="TreeGrafter"/>
</dbReference>
<dbReference type="CDD" id="cd00475">
    <property type="entry name" value="Cis_IPPS"/>
    <property type="match status" value="1"/>
</dbReference>
<dbReference type="Gene3D" id="3.40.1180.10">
    <property type="entry name" value="Decaprenyl diphosphate synthase-like"/>
    <property type="match status" value="1"/>
</dbReference>
<dbReference type="HAMAP" id="MF_01139">
    <property type="entry name" value="ISPT"/>
    <property type="match status" value="1"/>
</dbReference>
<dbReference type="InterPro" id="IPR001441">
    <property type="entry name" value="UPP_synth-like"/>
</dbReference>
<dbReference type="InterPro" id="IPR018520">
    <property type="entry name" value="UPP_synth-like_CS"/>
</dbReference>
<dbReference type="InterPro" id="IPR036424">
    <property type="entry name" value="UPP_synth-like_sf"/>
</dbReference>
<dbReference type="NCBIfam" id="NF011404">
    <property type="entry name" value="PRK14829.1"/>
    <property type="match status" value="1"/>
</dbReference>
<dbReference type="NCBIfam" id="TIGR00055">
    <property type="entry name" value="uppS"/>
    <property type="match status" value="1"/>
</dbReference>
<dbReference type="PANTHER" id="PTHR10291:SF0">
    <property type="entry name" value="DEHYDRODOLICHYL DIPHOSPHATE SYNTHASE 2"/>
    <property type="match status" value="1"/>
</dbReference>
<dbReference type="PANTHER" id="PTHR10291">
    <property type="entry name" value="DEHYDRODOLICHYL DIPHOSPHATE SYNTHASE FAMILY MEMBER"/>
    <property type="match status" value="1"/>
</dbReference>
<dbReference type="Pfam" id="PF01255">
    <property type="entry name" value="Prenyltransf"/>
    <property type="match status" value="1"/>
</dbReference>
<dbReference type="SUPFAM" id="SSF64005">
    <property type="entry name" value="Undecaprenyl diphosphate synthase"/>
    <property type="match status" value="1"/>
</dbReference>
<dbReference type="PROSITE" id="PS01066">
    <property type="entry name" value="UPP_SYNTHASE"/>
    <property type="match status" value="1"/>
</dbReference>
<protein>
    <recommendedName>
        <fullName evidence="1">Isoprenyl transferase 2</fullName>
        <ecNumber evidence="1">2.5.1.-</ecNumber>
    </recommendedName>
</protein>
<comment type="function">
    <text evidence="1">Catalyzes the condensation of isopentenyl diphosphate (IPP) with allylic pyrophosphates generating different type of terpenoids.</text>
</comment>
<comment type="cofactor">
    <cofactor evidence="1">
        <name>Mg(2+)</name>
        <dbReference type="ChEBI" id="CHEBI:18420"/>
    </cofactor>
    <text evidence="1">Binds 2 magnesium ions per subunit.</text>
</comment>
<comment type="subunit">
    <text evidence="1">Homodimer.</text>
</comment>
<comment type="similarity">
    <text evidence="1">Belongs to the UPP synthase family.</text>
</comment>
<sequence length="249" mass="28731">MEIFSVDWTGQTPPHIPRKSLPRHVAVVMDGNGRWANQRNLPRIEGHKAGESALIDVVAGAVQVGVPYLSLYVFSTENWLRAPDEVRFLLRFTRDVIARRRELFAHWGVRVRWSGVPNRLGKVLVKELRDTEEITKKNTAMNLNVCLNYGSRQEIVNAIKSIVSDVNSGLISAKSVNEKIISRRMYMPDFPDVDLFLRSSGENRMSNFMLWQSAYAELIFMSKLWPDFRRDDFWAALRAYSGRSRRFGR</sequence>
<keyword id="KW-0460">Magnesium</keyword>
<keyword id="KW-0479">Metal-binding</keyword>
<keyword id="KW-0808">Transferase</keyword>
<name>ISPT2_TROW8</name>
<accession>Q83HN8</accession>
<reference key="1">
    <citation type="journal article" date="2003" name="Lancet">
        <title>Sequencing and analysis of the genome of the Whipple's disease bacterium Tropheryma whipplei.</title>
        <authorList>
            <person name="Bentley S.D."/>
            <person name="Maiwald M."/>
            <person name="Murphy L.D."/>
            <person name="Pallen M.J."/>
            <person name="Yeats C.A."/>
            <person name="Dover L.G."/>
            <person name="Norbertczak H.T."/>
            <person name="Besra G.S."/>
            <person name="Quail M.A."/>
            <person name="Harris D.E."/>
            <person name="von Herbay A."/>
            <person name="Goble A."/>
            <person name="Rutter S."/>
            <person name="Squares R."/>
            <person name="Squares S."/>
            <person name="Barrell B.G."/>
            <person name="Parkhill J."/>
            <person name="Relman D.A."/>
        </authorList>
    </citation>
    <scope>NUCLEOTIDE SEQUENCE [LARGE SCALE GENOMIC DNA]</scope>
    <source>
        <strain>TW08/27</strain>
    </source>
</reference>